<accession>O48646</accession>
<accession>Q94BV3</accession>
<keyword id="KW-0496">Mitochondrion</keyword>
<keyword id="KW-0560">Oxidoreductase</keyword>
<keyword id="KW-0575">Peroxidase</keyword>
<keyword id="KW-1185">Reference proteome</keyword>
<keyword id="KW-0346">Stress response</keyword>
<keyword id="KW-0809">Transit peptide</keyword>
<sequence>MLRSSIRLLYIRRTSPLLRSLSSSSSSSSSKRFDSAKPLFNSHRIISLPISTTGAKLSRSEHSMAASSEPKSLYDFTVKDAKGNDVDLSIYKGKVLLIVNVASQCGLTNSNYTELAQLYEKYKGHGFEILAFPCNQFGNQEPGTNEEIVQFACTRFKAEYPIFDKVDVNGDKAAPVYKFLKSSKGGLFGDGIKWNFAKFLVDKDGNVVDRFAPTTSPLSIEKDVKKLLGVTA</sequence>
<protein>
    <recommendedName>
        <fullName>Probable phospholipid hydroperoxide glutathione peroxidase 6, mitochondrial</fullName>
        <shortName>AtGPX1</shortName>
        <shortName>PHGPx</shortName>
        <ecNumber>1.11.1.12</ecNumber>
    </recommendedName>
</protein>
<comment type="function">
    <text evidence="1">Protects cells and enzymes from oxidative damage, by catalyzing the reduction of hydrogen peroxide, lipid peroxides and organic hydroperoxide, by glutathione.</text>
</comment>
<comment type="catalytic activity">
    <reaction evidence="2">
        <text>a hydroperoxy polyunsaturated fatty acid + 2 glutathione = a hydroxy polyunsaturated fatty acid + glutathione disulfide + H2O</text>
        <dbReference type="Rhea" id="RHEA:19057"/>
        <dbReference type="ChEBI" id="CHEBI:15377"/>
        <dbReference type="ChEBI" id="CHEBI:57925"/>
        <dbReference type="ChEBI" id="CHEBI:58297"/>
        <dbReference type="ChEBI" id="CHEBI:131871"/>
        <dbReference type="ChEBI" id="CHEBI:134019"/>
        <dbReference type="EC" id="1.11.1.12"/>
    </reaction>
</comment>
<comment type="subcellular location">
    <subcellularLocation>
        <location evidence="7">Mitochondrion</location>
    </subcellularLocation>
</comment>
<comment type="tissue specificity">
    <text evidence="4 6">Expressed at a low but detectable level in leaves, stems, and flowers, but at a higher level in siliques and even higher in roots. Predominantly expressed in seeds.</text>
</comment>
<comment type="induction">
    <text evidence="4 5 6">By salt stress, osmotic stress, cold treatment, and metals. Up-regulated by salicylic acid (SA), jasmonic acid (JA), abscisic acid (ABA) and auxin.</text>
</comment>
<comment type="similarity">
    <text evidence="7">Belongs to the glutathione peroxidase family.</text>
</comment>
<comment type="sequence caution" evidence="7">
    <conflict type="erroneous initiation">
        <sequence resource="EMBL-CDS" id="AAC09173"/>
    </conflict>
    <text>Truncated N-terminus.</text>
</comment>
<comment type="sequence caution" evidence="7">
    <conflict type="erroneous initiation">
        <sequence resource="EMBL-CDS" id="AAM66969"/>
    </conflict>
    <text>Truncated N-terminus.</text>
</comment>
<comment type="sequence caution" evidence="7">
    <conflict type="erroneous initiation">
        <sequence resource="EMBL-CDS" id="BAA24226"/>
    </conflict>
    <text>Truncated N-terminus.</text>
</comment>
<comment type="sequence caution" evidence="7">
    <conflict type="erroneous initiation">
        <sequence resource="EMBL-CDS" id="CAB39931"/>
    </conflict>
    <text>Truncated N-terminus.</text>
</comment>
<comment type="sequence caution" evidence="7">
    <conflict type="erroneous initiation">
        <sequence resource="EMBL-CDS" id="CAB78203"/>
    </conflict>
    <text>Truncated N-terminus.</text>
</comment>
<dbReference type="EC" id="1.11.1.12"/>
<dbReference type="EMBL" id="AF030132">
    <property type="protein sequence ID" value="AAC09173.1"/>
    <property type="status" value="ALT_INIT"/>
    <property type="molecule type" value="mRNA"/>
</dbReference>
<dbReference type="EMBL" id="AL049500">
    <property type="protein sequence ID" value="CAB39931.1"/>
    <property type="status" value="ALT_INIT"/>
    <property type="molecule type" value="Genomic_DNA"/>
</dbReference>
<dbReference type="EMBL" id="AL161532">
    <property type="protein sequence ID" value="CAB78203.1"/>
    <property type="status" value="ALT_INIT"/>
    <property type="molecule type" value="Genomic_DNA"/>
</dbReference>
<dbReference type="EMBL" id="CP002687">
    <property type="protein sequence ID" value="AEE83029.1"/>
    <property type="molecule type" value="Genomic_DNA"/>
</dbReference>
<dbReference type="EMBL" id="AY039863">
    <property type="protein sequence ID" value="AAK63967.1"/>
    <property type="molecule type" value="mRNA"/>
</dbReference>
<dbReference type="EMBL" id="AY077655">
    <property type="protein sequence ID" value="AAL76133.1"/>
    <property type="molecule type" value="mRNA"/>
</dbReference>
<dbReference type="EMBL" id="AY088647">
    <property type="protein sequence ID" value="AAM66969.1"/>
    <property type="status" value="ALT_INIT"/>
    <property type="molecule type" value="mRNA"/>
</dbReference>
<dbReference type="EMBL" id="AB001568">
    <property type="protein sequence ID" value="BAA24226.1"/>
    <property type="status" value="ALT_INIT"/>
    <property type="molecule type" value="mRNA"/>
</dbReference>
<dbReference type="PIR" id="T04207">
    <property type="entry name" value="T04207"/>
</dbReference>
<dbReference type="RefSeq" id="NP_192897.2">
    <property type="nucleotide sequence ID" value="NM_117229.4"/>
</dbReference>
<dbReference type="SMR" id="O48646"/>
<dbReference type="BioGRID" id="12064">
    <property type="interactions" value="3"/>
</dbReference>
<dbReference type="FunCoup" id="O48646">
    <property type="interactions" value="2184"/>
</dbReference>
<dbReference type="IntAct" id="O48646">
    <property type="interactions" value="2"/>
</dbReference>
<dbReference type="MINT" id="O48646"/>
<dbReference type="STRING" id="3702.O48646"/>
<dbReference type="PeroxiBase" id="2502">
    <property type="entry name" value="AtGPx06"/>
</dbReference>
<dbReference type="iPTMnet" id="O48646"/>
<dbReference type="PaxDb" id="3702-AT4G11600.1"/>
<dbReference type="ProteomicsDB" id="220582"/>
<dbReference type="EnsemblPlants" id="AT4G11600.1">
    <property type="protein sequence ID" value="AT4G11600.1"/>
    <property type="gene ID" value="AT4G11600"/>
</dbReference>
<dbReference type="GeneID" id="826765"/>
<dbReference type="Gramene" id="AT4G11600.1">
    <property type="protein sequence ID" value="AT4G11600.1"/>
    <property type="gene ID" value="AT4G11600"/>
</dbReference>
<dbReference type="KEGG" id="ath:AT4G11600"/>
<dbReference type="Araport" id="AT4G11600"/>
<dbReference type="TAIR" id="AT4G11600">
    <property type="gene designation" value="GPX6"/>
</dbReference>
<dbReference type="eggNOG" id="KOG1651">
    <property type="taxonomic scope" value="Eukaryota"/>
</dbReference>
<dbReference type="HOGENOM" id="CLU_029507_0_1_1"/>
<dbReference type="InParanoid" id="O48646"/>
<dbReference type="OMA" id="TFPMTEK"/>
<dbReference type="PhylomeDB" id="O48646"/>
<dbReference type="CD-CODE" id="4299E36E">
    <property type="entry name" value="Nucleolus"/>
</dbReference>
<dbReference type="PRO" id="PR:O48646"/>
<dbReference type="Proteomes" id="UP000006548">
    <property type="component" value="Chromosome 4"/>
</dbReference>
<dbReference type="ExpressionAtlas" id="O48646">
    <property type="expression patterns" value="baseline and differential"/>
</dbReference>
<dbReference type="GO" id="GO:0009507">
    <property type="term" value="C:chloroplast"/>
    <property type="evidence" value="ECO:0007005"/>
    <property type="project" value="TAIR"/>
</dbReference>
<dbReference type="GO" id="GO:0005829">
    <property type="term" value="C:cytosol"/>
    <property type="evidence" value="ECO:0000314"/>
    <property type="project" value="TAIR"/>
</dbReference>
<dbReference type="GO" id="GO:0005739">
    <property type="term" value="C:mitochondrion"/>
    <property type="evidence" value="ECO:0000314"/>
    <property type="project" value="TAIR"/>
</dbReference>
<dbReference type="GO" id="GO:0005886">
    <property type="term" value="C:plasma membrane"/>
    <property type="evidence" value="ECO:0007005"/>
    <property type="project" value="TAIR"/>
</dbReference>
<dbReference type="GO" id="GO:0004602">
    <property type="term" value="F:glutathione peroxidase activity"/>
    <property type="evidence" value="ECO:0000250"/>
    <property type="project" value="TAIR"/>
</dbReference>
<dbReference type="GO" id="GO:0047066">
    <property type="term" value="F:phospholipid-hydroperoxide glutathione peroxidase activity"/>
    <property type="evidence" value="ECO:0007669"/>
    <property type="project" value="UniProtKB-EC"/>
</dbReference>
<dbReference type="GO" id="GO:0006979">
    <property type="term" value="P:response to oxidative stress"/>
    <property type="evidence" value="ECO:0007669"/>
    <property type="project" value="InterPro"/>
</dbReference>
<dbReference type="CDD" id="cd00340">
    <property type="entry name" value="GSH_Peroxidase"/>
    <property type="match status" value="1"/>
</dbReference>
<dbReference type="FunFam" id="3.40.30.10:FF:000025">
    <property type="entry name" value="Glutathione peroxidase"/>
    <property type="match status" value="1"/>
</dbReference>
<dbReference type="Gene3D" id="3.40.30.10">
    <property type="entry name" value="Glutaredoxin"/>
    <property type="match status" value="1"/>
</dbReference>
<dbReference type="InterPro" id="IPR000889">
    <property type="entry name" value="Glutathione_peroxidase"/>
</dbReference>
<dbReference type="InterPro" id="IPR029759">
    <property type="entry name" value="GPX_AS"/>
</dbReference>
<dbReference type="InterPro" id="IPR029760">
    <property type="entry name" value="GPX_CS"/>
</dbReference>
<dbReference type="InterPro" id="IPR036249">
    <property type="entry name" value="Thioredoxin-like_sf"/>
</dbReference>
<dbReference type="InterPro" id="IPR013766">
    <property type="entry name" value="Thioredoxin_domain"/>
</dbReference>
<dbReference type="PANTHER" id="PTHR11592">
    <property type="entry name" value="GLUTATHIONE PEROXIDASE"/>
    <property type="match status" value="1"/>
</dbReference>
<dbReference type="PANTHER" id="PTHR11592:SF118">
    <property type="entry name" value="PHOSPHOLIPID HYDROPEROXIDE GLUTATHIONE PEROXIDASE 6, MITOCHONDRIAL-RELATED"/>
    <property type="match status" value="1"/>
</dbReference>
<dbReference type="Pfam" id="PF00255">
    <property type="entry name" value="GSHPx"/>
    <property type="match status" value="1"/>
</dbReference>
<dbReference type="PRINTS" id="PR01011">
    <property type="entry name" value="GLUTPROXDASE"/>
</dbReference>
<dbReference type="SUPFAM" id="SSF52833">
    <property type="entry name" value="Thioredoxin-like"/>
    <property type="match status" value="1"/>
</dbReference>
<dbReference type="PROSITE" id="PS00460">
    <property type="entry name" value="GLUTATHIONE_PEROXID_1"/>
    <property type="match status" value="1"/>
</dbReference>
<dbReference type="PROSITE" id="PS00763">
    <property type="entry name" value="GLUTATHIONE_PEROXID_2"/>
    <property type="match status" value="1"/>
</dbReference>
<dbReference type="PROSITE" id="PS51355">
    <property type="entry name" value="GLUTATHIONE_PEROXID_3"/>
    <property type="match status" value="1"/>
</dbReference>
<proteinExistence type="evidence at transcript level"/>
<reference key="1">
    <citation type="online journal article" date="1998" name="Plant Gene Register">
        <title>Cloning of a cDNA encoding a putative glutathione peroxidase protein from Arabidopsis thaliana.</title>
        <authorList>
            <person name="Bilodeau P."/>
            <person name="Luo M."/>
            <person name="Dennis E.S."/>
            <person name="Peacock W.J."/>
            <person name="Chaudhury A.M."/>
        </authorList>
        <locator>PGR98-047</locator>
    </citation>
    <scope>NUCLEOTIDE SEQUENCE [MRNA]</scope>
    <scope>TISSUE SPECIFICITY</scope>
    <scope>INDUCTION</scope>
    <source>
        <strain>cv. Landsberg erecta</strain>
    </source>
</reference>
<reference key="2">
    <citation type="journal article" date="1999" name="Nature">
        <title>Sequence and analysis of chromosome 4 of the plant Arabidopsis thaliana.</title>
        <authorList>
            <person name="Mayer K.F.X."/>
            <person name="Schueller C."/>
            <person name="Wambutt R."/>
            <person name="Murphy G."/>
            <person name="Volckaert G."/>
            <person name="Pohl T."/>
            <person name="Duesterhoeft A."/>
            <person name="Stiekema W."/>
            <person name="Entian K.-D."/>
            <person name="Terryn N."/>
            <person name="Harris B."/>
            <person name="Ansorge W."/>
            <person name="Brandt P."/>
            <person name="Grivell L.A."/>
            <person name="Rieger M."/>
            <person name="Weichselgartner M."/>
            <person name="de Simone V."/>
            <person name="Obermaier B."/>
            <person name="Mache R."/>
            <person name="Mueller M."/>
            <person name="Kreis M."/>
            <person name="Delseny M."/>
            <person name="Puigdomenech P."/>
            <person name="Watson M."/>
            <person name="Schmidtheini T."/>
            <person name="Reichert B."/>
            <person name="Portetelle D."/>
            <person name="Perez-Alonso M."/>
            <person name="Boutry M."/>
            <person name="Bancroft I."/>
            <person name="Vos P."/>
            <person name="Hoheisel J."/>
            <person name="Zimmermann W."/>
            <person name="Wedler H."/>
            <person name="Ridley P."/>
            <person name="Langham S.-A."/>
            <person name="McCullagh B."/>
            <person name="Bilham L."/>
            <person name="Robben J."/>
            <person name="van der Schueren J."/>
            <person name="Grymonprez B."/>
            <person name="Chuang Y.-J."/>
            <person name="Vandenbussche F."/>
            <person name="Braeken M."/>
            <person name="Weltjens I."/>
            <person name="Voet M."/>
            <person name="Bastiaens I."/>
            <person name="Aert R."/>
            <person name="Defoor E."/>
            <person name="Weitzenegger T."/>
            <person name="Bothe G."/>
            <person name="Ramsperger U."/>
            <person name="Hilbert H."/>
            <person name="Braun M."/>
            <person name="Holzer E."/>
            <person name="Brandt A."/>
            <person name="Peters S."/>
            <person name="van Staveren M."/>
            <person name="Dirkse W."/>
            <person name="Mooijman P."/>
            <person name="Klein Lankhorst R."/>
            <person name="Rose M."/>
            <person name="Hauf J."/>
            <person name="Koetter P."/>
            <person name="Berneiser S."/>
            <person name="Hempel S."/>
            <person name="Feldpausch M."/>
            <person name="Lamberth S."/>
            <person name="Van den Daele H."/>
            <person name="De Keyser A."/>
            <person name="Buysshaert C."/>
            <person name="Gielen J."/>
            <person name="Villarroel R."/>
            <person name="De Clercq R."/>
            <person name="van Montagu M."/>
            <person name="Rogers J."/>
            <person name="Cronin A."/>
            <person name="Quail M.A."/>
            <person name="Bray-Allen S."/>
            <person name="Clark L."/>
            <person name="Doggett J."/>
            <person name="Hall S."/>
            <person name="Kay M."/>
            <person name="Lennard N."/>
            <person name="McLay K."/>
            <person name="Mayes R."/>
            <person name="Pettett A."/>
            <person name="Rajandream M.A."/>
            <person name="Lyne M."/>
            <person name="Benes V."/>
            <person name="Rechmann S."/>
            <person name="Borkova D."/>
            <person name="Bloecker H."/>
            <person name="Scharfe M."/>
            <person name="Grimm M."/>
            <person name="Loehnert T.-H."/>
            <person name="Dose S."/>
            <person name="de Haan M."/>
            <person name="Maarse A.C."/>
            <person name="Schaefer M."/>
            <person name="Mueller-Auer S."/>
            <person name="Gabel C."/>
            <person name="Fuchs M."/>
            <person name="Fartmann B."/>
            <person name="Granderath K."/>
            <person name="Dauner D."/>
            <person name="Herzl A."/>
            <person name="Neumann S."/>
            <person name="Argiriou A."/>
            <person name="Vitale D."/>
            <person name="Liguori R."/>
            <person name="Piravandi E."/>
            <person name="Massenet O."/>
            <person name="Quigley F."/>
            <person name="Clabauld G."/>
            <person name="Muendlein A."/>
            <person name="Felber R."/>
            <person name="Schnabl S."/>
            <person name="Hiller R."/>
            <person name="Schmidt W."/>
            <person name="Lecharny A."/>
            <person name="Aubourg S."/>
            <person name="Chefdor F."/>
            <person name="Cooke R."/>
            <person name="Berger C."/>
            <person name="Monfort A."/>
            <person name="Casacuberta E."/>
            <person name="Gibbons T."/>
            <person name="Weber N."/>
            <person name="Vandenbol M."/>
            <person name="Bargues M."/>
            <person name="Terol J."/>
            <person name="Torres A."/>
            <person name="Perez-Perez A."/>
            <person name="Purnelle B."/>
            <person name="Bent E."/>
            <person name="Johnson S."/>
            <person name="Tacon D."/>
            <person name="Jesse T."/>
            <person name="Heijnen L."/>
            <person name="Schwarz S."/>
            <person name="Scholler P."/>
            <person name="Heber S."/>
            <person name="Francs P."/>
            <person name="Bielke C."/>
            <person name="Frishman D."/>
            <person name="Haase D."/>
            <person name="Lemcke K."/>
            <person name="Mewes H.-W."/>
            <person name="Stocker S."/>
            <person name="Zaccaria P."/>
            <person name="Bevan M."/>
            <person name="Wilson R.K."/>
            <person name="de la Bastide M."/>
            <person name="Habermann K."/>
            <person name="Parnell L."/>
            <person name="Dedhia N."/>
            <person name="Gnoj L."/>
            <person name="Schutz K."/>
            <person name="Huang E."/>
            <person name="Spiegel L."/>
            <person name="Sekhon M."/>
            <person name="Murray J."/>
            <person name="Sheet P."/>
            <person name="Cordes M."/>
            <person name="Abu-Threideh J."/>
            <person name="Stoneking T."/>
            <person name="Kalicki J."/>
            <person name="Graves T."/>
            <person name="Harmon G."/>
            <person name="Edwards J."/>
            <person name="Latreille P."/>
            <person name="Courtney L."/>
            <person name="Cloud J."/>
            <person name="Abbott A."/>
            <person name="Scott K."/>
            <person name="Johnson D."/>
            <person name="Minx P."/>
            <person name="Bentley D."/>
            <person name="Fulton B."/>
            <person name="Miller N."/>
            <person name="Greco T."/>
            <person name="Kemp K."/>
            <person name="Kramer J."/>
            <person name="Fulton L."/>
            <person name="Mardis E."/>
            <person name="Dante M."/>
            <person name="Pepin K."/>
            <person name="Hillier L.W."/>
            <person name="Nelson J."/>
            <person name="Spieth J."/>
            <person name="Ryan E."/>
            <person name="Andrews S."/>
            <person name="Geisel C."/>
            <person name="Layman D."/>
            <person name="Du H."/>
            <person name="Ali J."/>
            <person name="Berghoff A."/>
            <person name="Jones K."/>
            <person name="Drone K."/>
            <person name="Cotton M."/>
            <person name="Joshu C."/>
            <person name="Antonoiu B."/>
            <person name="Zidanic M."/>
            <person name="Strong C."/>
            <person name="Sun H."/>
            <person name="Lamar B."/>
            <person name="Yordan C."/>
            <person name="Ma P."/>
            <person name="Zhong J."/>
            <person name="Preston R."/>
            <person name="Vil D."/>
            <person name="Shekher M."/>
            <person name="Matero A."/>
            <person name="Shah R."/>
            <person name="Swaby I.K."/>
            <person name="O'Shaughnessy A."/>
            <person name="Rodriguez M."/>
            <person name="Hoffman J."/>
            <person name="Till S."/>
            <person name="Granat S."/>
            <person name="Shohdy N."/>
            <person name="Hasegawa A."/>
            <person name="Hameed A."/>
            <person name="Lodhi M."/>
            <person name="Johnson A."/>
            <person name="Chen E."/>
            <person name="Marra M.A."/>
            <person name="Martienssen R."/>
            <person name="McCombie W.R."/>
        </authorList>
    </citation>
    <scope>NUCLEOTIDE SEQUENCE [LARGE SCALE GENOMIC DNA]</scope>
    <source>
        <strain>cv. Columbia</strain>
    </source>
</reference>
<reference key="3">
    <citation type="journal article" date="2017" name="Plant J.">
        <title>Araport11: a complete reannotation of the Arabidopsis thaliana reference genome.</title>
        <authorList>
            <person name="Cheng C.Y."/>
            <person name="Krishnakumar V."/>
            <person name="Chan A.P."/>
            <person name="Thibaud-Nissen F."/>
            <person name="Schobel S."/>
            <person name="Town C.D."/>
        </authorList>
    </citation>
    <scope>GENOME REANNOTATION</scope>
    <source>
        <strain>cv. Columbia</strain>
    </source>
</reference>
<reference key="4">
    <citation type="journal article" date="2003" name="Science">
        <title>Empirical analysis of transcriptional activity in the Arabidopsis genome.</title>
        <authorList>
            <person name="Yamada K."/>
            <person name="Lim J."/>
            <person name="Dale J.M."/>
            <person name="Chen H."/>
            <person name="Shinn P."/>
            <person name="Palm C.J."/>
            <person name="Southwick A.M."/>
            <person name="Wu H.C."/>
            <person name="Kim C.J."/>
            <person name="Nguyen M."/>
            <person name="Pham P.K."/>
            <person name="Cheuk R.F."/>
            <person name="Karlin-Newmann G."/>
            <person name="Liu S.X."/>
            <person name="Lam B."/>
            <person name="Sakano H."/>
            <person name="Wu T."/>
            <person name="Yu G."/>
            <person name="Miranda M."/>
            <person name="Quach H.L."/>
            <person name="Tripp M."/>
            <person name="Chang C.H."/>
            <person name="Lee J.M."/>
            <person name="Toriumi M.J."/>
            <person name="Chan M.M."/>
            <person name="Tang C.C."/>
            <person name="Onodera C.S."/>
            <person name="Deng J.M."/>
            <person name="Akiyama K."/>
            <person name="Ansari Y."/>
            <person name="Arakawa T."/>
            <person name="Banh J."/>
            <person name="Banno F."/>
            <person name="Bowser L."/>
            <person name="Brooks S.Y."/>
            <person name="Carninci P."/>
            <person name="Chao Q."/>
            <person name="Choy N."/>
            <person name="Enju A."/>
            <person name="Goldsmith A.D."/>
            <person name="Gurjal M."/>
            <person name="Hansen N.F."/>
            <person name="Hayashizaki Y."/>
            <person name="Johnson-Hopson C."/>
            <person name="Hsuan V.W."/>
            <person name="Iida K."/>
            <person name="Karnes M."/>
            <person name="Khan S."/>
            <person name="Koesema E."/>
            <person name="Ishida J."/>
            <person name="Jiang P.X."/>
            <person name="Jones T."/>
            <person name="Kawai J."/>
            <person name="Kamiya A."/>
            <person name="Meyers C."/>
            <person name="Nakajima M."/>
            <person name="Narusaka M."/>
            <person name="Seki M."/>
            <person name="Sakurai T."/>
            <person name="Satou M."/>
            <person name="Tamse R."/>
            <person name="Vaysberg M."/>
            <person name="Wallender E.K."/>
            <person name="Wong C."/>
            <person name="Yamamura Y."/>
            <person name="Yuan S."/>
            <person name="Shinozaki K."/>
            <person name="Davis R.W."/>
            <person name="Theologis A."/>
            <person name="Ecker J.R."/>
        </authorList>
    </citation>
    <scope>NUCLEOTIDE SEQUENCE [LARGE SCALE MRNA]</scope>
    <source>
        <strain>cv. Columbia</strain>
    </source>
</reference>
<reference key="5">
    <citation type="submission" date="2002-03" db="EMBL/GenBank/DDBJ databases">
        <title>Full-length cDNA from Arabidopsis thaliana.</title>
        <authorList>
            <person name="Brover V.V."/>
            <person name="Troukhan M.E."/>
            <person name="Alexandrov N.A."/>
            <person name="Lu Y.-P."/>
            <person name="Flavell R.B."/>
            <person name="Feldmann K.A."/>
        </authorList>
    </citation>
    <scope>NUCLEOTIDE SEQUENCE [LARGE SCALE MRNA] OF 22-232</scope>
</reference>
<reference key="6">
    <citation type="journal article" date="1997" name="Genes Genet. Syst.">
        <title>Putative phospholipid hydroperoxide glutathione peroxidase gene from Arabidopsis thaliana induced by oxidative stress.</title>
        <authorList>
            <person name="Sugimoto M."/>
            <person name="Sakamoto W."/>
        </authorList>
    </citation>
    <scope>NUCLEOTIDE SEQUENCE [MRNA] OF 31-232</scope>
    <scope>INDUCTION</scope>
    <source>
        <strain>cv. Columbia</strain>
    </source>
</reference>
<reference key="7">
    <citation type="journal article" date="2003" name="Plant J.">
        <title>Glutathione peroxidase genes in Arabidopsis are ubiquitous and regulated by abiotic stresses through diverse signaling pathways.</title>
        <authorList>
            <person name="Rodriguez Milla M.A."/>
            <person name="Maurer A."/>
            <person name="Rodriguez Huete A."/>
            <person name="Gustafson J.P."/>
        </authorList>
    </citation>
    <scope>GENE FAMILY</scope>
    <scope>NOMENCLATURE</scope>
    <scope>TISSUE SPECIFICITY</scope>
    <scope>INDUCTION</scope>
</reference>
<name>GPX6_ARATH</name>
<evidence type="ECO:0000250" key="1">
    <source>
        <dbReference type="UniProtKB" id="O70325"/>
    </source>
</evidence>
<evidence type="ECO:0000250" key="2">
    <source>
        <dbReference type="UniProtKB" id="P36968"/>
    </source>
</evidence>
<evidence type="ECO:0000255" key="3"/>
<evidence type="ECO:0000269" key="4">
    <source>
    </source>
</evidence>
<evidence type="ECO:0000269" key="5">
    <source>
    </source>
</evidence>
<evidence type="ECO:0000269" key="6">
    <source ref="1"/>
</evidence>
<evidence type="ECO:0000305" key="7"/>
<feature type="transit peptide" description="Mitochondrion" evidence="3">
    <location>
        <begin position="1"/>
        <end position="54"/>
    </location>
</feature>
<feature type="chain" id="PRO_0000013088" description="Probable phospholipid hydroperoxide glutathione peroxidase 6, mitochondrial">
    <location>
        <begin position="55"/>
        <end position="232"/>
    </location>
</feature>
<feature type="active site" evidence="2">
    <location>
        <position position="105"/>
    </location>
</feature>
<feature type="sequence conflict" description="In Ref. 1." evidence="7" ref="1">
    <original>S</original>
    <variation>SSSS</variation>
    <location>
        <position position="30"/>
    </location>
</feature>
<feature type="sequence conflict" description="In Ref. 6." evidence="7" ref="6">
    <original>S</original>
    <variation>Y</variation>
    <location>
        <position position="51"/>
    </location>
</feature>
<organism>
    <name type="scientific">Arabidopsis thaliana</name>
    <name type="common">Mouse-ear cress</name>
    <dbReference type="NCBI Taxonomy" id="3702"/>
    <lineage>
        <taxon>Eukaryota</taxon>
        <taxon>Viridiplantae</taxon>
        <taxon>Streptophyta</taxon>
        <taxon>Embryophyta</taxon>
        <taxon>Tracheophyta</taxon>
        <taxon>Spermatophyta</taxon>
        <taxon>Magnoliopsida</taxon>
        <taxon>eudicotyledons</taxon>
        <taxon>Gunneridae</taxon>
        <taxon>Pentapetalae</taxon>
        <taxon>rosids</taxon>
        <taxon>malvids</taxon>
        <taxon>Brassicales</taxon>
        <taxon>Brassicaceae</taxon>
        <taxon>Camelineae</taxon>
        <taxon>Arabidopsis</taxon>
    </lineage>
</organism>
<gene>
    <name type="primary">GPX6</name>
    <name type="synonym">GPX1</name>
    <name type="ordered locus">At4g11600</name>
    <name type="ORF">T5C23.30</name>
</gene>